<protein>
    <recommendedName>
        <fullName>Electron transfer flavoprotein subunit alpha, mitochondrial</fullName>
        <shortName>Alpha-ETF</shortName>
    </recommendedName>
</protein>
<accession>P13803</accession>
<accession>Q5M7W0</accession>
<dbReference type="EMBL" id="M22030">
    <property type="protein sequence ID" value="AAA41130.1"/>
    <property type="status" value="ALT_FRAME"/>
    <property type="molecule type" value="Genomic_DNA"/>
</dbReference>
<dbReference type="EMBL" id="BC088412">
    <property type="protein sequence ID" value="AAH88412.1"/>
    <property type="molecule type" value="mRNA"/>
</dbReference>
<dbReference type="PIR" id="A31568">
    <property type="entry name" value="A31568"/>
</dbReference>
<dbReference type="RefSeq" id="NP_001009668.1">
    <property type="nucleotide sequence ID" value="NM_001009668.1"/>
</dbReference>
<dbReference type="SMR" id="P13803"/>
<dbReference type="BioGRID" id="256687">
    <property type="interactions" value="1"/>
</dbReference>
<dbReference type="FunCoup" id="P13803">
    <property type="interactions" value="1868"/>
</dbReference>
<dbReference type="IntAct" id="P13803">
    <property type="interactions" value="1"/>
</dbReference>
<dbReference type="STRING" id="10116.ENSRNOP00000020544"/>
<dbReference type="GlyGen" id="P13803">
    <property type="glycosylation" value="3 sites, 1 O-linked glycan (3 sites)"/>
</dbReference>
<dbReference type="iPTMnet" id="P13803"/>
<dbReference type="PhosphoSitePlus" id="P13803"/>
<dbReference type="jPOST" id="P13803"/>
<dbReference type="PaxDb" id="10116-ENSRNOP00000020544"/>
<dbReference type="GeneID" id="300726"/>
<dbReference type="KEGG" id="rno:300726"/>
<dbReference type="UCSC" id="RGD:628747">
    <property type="organism name" value="rat"/>
</dbReference>
<dbReference type="AGR" id="RGD:628747"/>
<dbReference type="CTD" id="2108"/>
<dbReference type="RGD" id="628747">
    <property type="gene designation" value="Etfa"/>
</dbReference>
<dbReference type="VEuPathDB" id="HostDB:ENSRNOG00000015233"/>
<dbReference type="eggNOG" id="KOG3954">
    <property type="taxonomic scope" value="Eukaryota"/>
</dbReference>
<dbReference type="HOGENOM" id="CLU_034178_0_1_1"/>
<dbReference type="InParanoid" id="P13803"/>
<dbReference type="OrthoDB" id="58055at9989"/>
<dbReference type="PhylomeDB" id="P13803"/>
<dbReference type="TreeFam" id="TF105763"/>
<dbReference type="Reactome" id="R-RNO-611105">
    <property type="pathway name" value="Respiratory electron transport"/>
</dbReference>
<dbReference type="PRO" id="PR:P13803"/>
<dbReference type="Proteomes" id="UP000002494">
    <property type="component" value="Chromosome 8"/>
</dbReference>
<dbReference type="Bgee" id="ENSRNOG00000015233">
    <property type="expression patterns" value="Expressed in heart and 19 other cell types or tissues"/>
</dbReference>
<dbReference type="GO" id="GO:0045251">
    <property type="term" value="C:electron transfer flavoprotein complex"/>
    <property type="evidence" value="ECO:0000266"/>
    <property type="project" value="RGD"/>
</dbReference>
<dbReference type="GO" id="GO:0005759">
    <property type="term" value="C:mitochondrial matrix"/>
    <property type="evidence" value="ECO:0007669"/>
    <property type="project" value="UniProtKB-SubCell"/>
</dbReference>
<dbReference type="GO" id="GO:0005739">
    <property type="term" value="C:mitochondrion"/>
    <property type="evidence" value="ECO:0000318"/>
    <property type="project" value="GO_Central"/>
</dbReference>
<dbReference type="GO" id="GO:0009055">
    <property type="term" value="F:electron transfer activity"/>
    <property type="evidence" value="ECO:0000250"/>
    <property type="project" value="UniProtKB"/>
</dbReference>
<dbReference type="GO" id="GO:0050660">
    <property type="term" value="F:flavin adenine dinucleotide binding"/>
    <property type="evidence" value="ECO:0000266"/>
    <property type="project" value="RGD"/>
</dbReference>
<dbReference type="GO" id="GO:0016491">
    <property type="term" value="F:oxidoreductase activity"/>
    <property type="evidence" value="ECO:0000266"/>
    <property type="project" value="RGD"/>
</dbReference>
<dbReference type="GO" id="GO:0009063">
    <property type="term" value="P:amino acid catabolic process"/>
    <property type="evidence" value="ECO:0000266"/>
    <property type="project" value="RGD"/>
</dbReference>
<dbReference type="GO" id="GO:0033539">
    <property type="term" value="P:fatty acid beta-oxidation using acyl-CoA dehydrogenase"/>
    <property type="evidence" value="ECO:0000250"/>
    <property type="project" value="UniProtKB"/>
</dbReference>
<dbReference type="GO" id="GO:0022904">
    <property type="term" value="P:respiratory electron transport chain"/>
    <property type="evidence" value="ECO:0000266"/>
    <property type="project" value="RGD"/>
</dbReference>
<dbReference type="CDD" id="cd01715">
    <property type="entry name" value="ETF_alpha"/>
    <property type="match status" value="1"/>
</dbReference>
<dbReference type="FunFam" id="3.40.50.620:FF:000041">
    <property type="entry name" value="Electron transfer flavoprotein alpha subunit"/>
    <property type="match status" value="1"/>
</dbReference>
<dbReference type="FunFam" id="3.40.50.1220:FF:000001">
    <property type="entry name" value="Electron transfer flavoprotein, alpha subunit"/>
    <property type="match status" value="1"/>
</dbReference>
<dbReference type="Gene3D" id="3.40.50.620">
    <property type="entry name" value="HUPs"/>
    <property type="match status" value="1"/>
</dbReference>
<dbReference type="Gene3D" id="3.40.50.1220">
    <property type="entry name" value="TPP-binding domain"/>
    <property type="match status" value="1"/>
</dbReference>
<dbReference type="InterPro" id="IPR029035">
    <property type="entry name" value="DHS-like_NAD/FAD-binding_dom"/>
</dbReference>
<dbReference type="InterPro" id="IPR014730">
    <property type="entry name" value="ETF_a/b_N"/>
</dbReference>
<dbReference type="InterPro" id="IPR001308">
    <property type="entry name" value="ETF_a/FixB"/>
</dbReference>
<dbReference type="InterPro" id="IPR033947">
    <property type="entry name" value="ETF_alpha_N"/>
</dbReference>
<dbReference type="InterPro" id="IPR014731">
    <property type="entry name" value="ETF_asu_C"/>
</dbReference>
<dbReference type="InterPro" id="IPR018206">
    <property type="entry name" value="ETF_asu_C_CS"/>
</dbReference>
<dbReference type="InterPro" id="IPR014729">
    <property type="entry name" value="Rossmann-like_a/b/a_fold"/>
</dbReference>
<dbReference type="PANTHER" id="PTHR43153">
    <property type="entry name" value="ELECTRON TRANSFER FLAVOPROTEIN ALPHA"/>
    <property type="match status" value="1"/>
</dbReference>
<dbReference type="PANTHER" id="PTHR43153:SF1">
    <property type="entry name" value="ELECTRON TRANSFER FLAVOPROTEIN SUBUNIT ALPHA, MITOCHONDRIAL"/>
    <property type="match status" value="1"/>
</dbReference>
<dbReference type="Pfam" id="PF01012">
    <property type="entry name" value="ETF"/>
    <property type="match status" value="1"/>
</dbReference>
<dbReference type="Pfam" id="PF00766">
    <property type="entry name" value="ETF_alpha"/>
    <property type="match status" value="1"/>
</dbReference>
<dbReference type="PIRSF" id="PIRSF000089">
    <property type="entry name" value="Electra_flavoP_a"/>
    <property type="match status" value="1"/>
</dbReference>
<dbReference type="SMART" id="SM00893">
    <property type="entry name" value="ETF"/>
    <property type="match status" value="1"/>
</dbReference>
<dbReference type="SUPFAM" id="SSF52402">
    <property type="entry name" value="Adenine nucleotide alpha hydrolases-like"/>
    <property type="match status" value="1"/>
</dbReference>
<dbReference type="SUPFAM" id="SSF52467">
    <property type="entry name" value="DHS-like NAD/FAD-binding domain"/>
    <property type="match status" value="1"/>
</dbReference>
<dbReference type="PROSITE" id="PS00696">
    <property type="entry name" value="ETF_ALPHA"/>
    <property type="match status" value="1"/>
</dbReference>
<proteinExistence type="evidence at protein level"/>
<evidence type="ECO:0000250" key="1">
    <source>
        <dbReference type="UniProtKB" id="P13804"/>
    </source>
</evidence>
<evidence type="ECO:0000250" key="2">
    <source>
        <dbReference type="UniProtKB" id="Q99LC5"/>
    </source>
</evidence>
<evidence type="ECO:0000255" key="3"/>
<evidence type="ECO:0000269" key="4">
    <source>
    </source>
</evidence>
<evidence type="ECO:0000305" key="5"/>
<evidence type="ECO:0000305" key="6">
    <source>
    </source>
</evidence>
<keyword id="KW-0007">Acetylation</keyword>
<keyword id="KW-0903">Direct protein sequencing</keyword>
<keyword id="KW-0249">Electron transport</keyword>
<keyword id="KW-0274">FAD</keyword>
<keyword id="KW-0285">Flavoprotein</keyword>
<keyword id="KW-0496">Mitochondrion</keyword>
<keyword id="KW-0597">Phosphoprotein</keyword>
<keyword id="KW-1185">Reference proteome</keyword>
<keyword id="KW-0809">Transit peptide</keyword>
<keyword id="KW-0813">Transport</keyword>
<organism>
    <name type="scientific">Rattus norvegicus</name>
    <name type="common">Rat</name>
    <dbReference type="NCBI Taxonomy" id="10116"/>
    <lineage>
        <taxon>Eukaryota</taxon>
        <taxon>Metazoa</taxon>
        <taxon>Chordata</taxon>
        <taxon>Craniata</taxon>
        <taxon>Vertebrata</taxon>
        <taxon>Euteleostomi</taxon>
        <taxon>Mammalia</taxon>
        <taxon>Eutheria</taxon>
        <taxon>Euarchontoglires</taxon>
        <taxon>Glires</taxon>
        <taxon>Rodentia</taxon>
        <taxon>Myomorpha</taxon>
        <taxon>Muroidea</taxon>
        <taxon>Muridae</taxon>
        <taxon>Murinae</taxon>
        <taxon>Rattus</taxon>
    </lineage>
</organism>
<gene>
    <name type="primary">Etfa</name>
</gene>
<reference key="1">
    <citation type="journal article" date="1988" name="Biochem. Biophys. Res. Commun.">
        <title>Molecular cloning of a cDNA for alpha-subunit of rat liver electron transfer flavoprotein.</title>
        <authorList>
            <person name="Shinzawa K."/>
            <person name="Inagaki T."/>
            <person name="Ohishi N."/>
            <person name="Ichihara C."/>
            <person name="Tsukagoshi N."/>
            <person name="Udaka S."/>
            <person name="Yagi K."/>
        </authorList>
    </citation>
    <scope>NUCLEOTIDE SEQUENCE [GENOMIC DNA]</scope>
    <source>
        <tissue>Liver</tissue>
    </source>
</reference>
<reference key="2">
    <citation type="journal article" date="2004" name="Genome Res.">
        <title>The status, quality, and expansion of the NIH full-length cDNA project: the Mammalian Gene Collection (MGC).</title>
        <authorList>
            <consortium name="The MGC Project Team"/>
        </authorList>
    </citation>
    <scope>NUCLEOTIDE SEQUENCE [LARGE SCALE MRNA]</scope>
    <source>
        <tissue>Kidney</tissue>
    </source>
</reference>
<reference key="3">
    <citation type="submission" date="2007-04" db="UniProtKB">
        <authorList>
            <person name="Lubec G."/>
            <person name="Afjehi-Sadat L."/>
            <person name="Chen W.-Q."/>
        </authorList>
    </citation>
    <scope>PROTEIN SEQUENCE OF 86-117; 127-139 AND 233-249</scope>
    <scope>IDENTIFICATION BY MASS SPECTROMETRY</scope>
    <source>
        <strain>Sprague-Dawley</strain>
        <tissue>Hippocampus</tissue>
        <tissue>Spinal cord</tissue>
    </source>
</reference>
<reference key="4">
    <citation type="journal article" date="1981" name="J. Biochem.">
        <title>Purification and properties of rat liver acyl-CoA dehydrogenases and electron transfer flavoprotein.</title>
        <authorList>
            <person name="Furuta S."/>
            <person name="Miyazawa S."/>
            <person name="Hashimoto T."/>
        </authorList>
    </citation>
    <scope>FUNCTION</scope>
    <scope>SUBCELLULAR LOCATION</scope>
    <scope>SUBUNIT</scope>
</reference>
<reference key="5">
    <citation type="journal article" date="2012" name="Nat. Commun.">
        <title>Quantitative maps of protein phosphorylation sites across 14 different rat organs and tissues.</title>
        <authorList>
            <person name="Lundby A."/>
            <person name="Secher A."/>
            <person name="Lage K."/>
            <person name="Nordsborg N.B."/>
            <person name="Dmytriyev A."/>
            <person name="Lundby C."/>
            <person name="Olsen J.V."/>
        </authorList>
    </citation>
    <scope>IDENTIFICATION BY MASS SPECTROMETRY [LARGE SCALE ANALYSIS]</scope>
</reference>
<sequence>MFRAAAPGQLRRAASLLRFQSTLVIAEHANDSLAPITLNTITAAGRLGGEVSCLVAGTKCDKVVQDLCKVAGVAKVLVAQHDAYKGLLPEELTPLILETQKQFSYTHICAGASAFGKNLLPRVAAKLNVAPVSDIIEIKSPDTFVRTIYAGNALCTVKCDEKVKVFSVRGTSFEAAAASGGSASSEKAPSSSSAGISEWLDQKLTKSDRPELTGAKVVVSGGRGLKSGENFKLLYDLADQLHAAVGASRAAVDAGFVPNDMQVGQTGKIVAPELYIAVGISGAIQHLAGMKDSKTIVAINKDPEAPIFQVADYGIVADLFKVVPEMTEILKKK</sequence>
<feature type="transit peptide" description="Mitochondrion" evidence="3">
    <location>
        <begin position="1"/>
        <end position="19"/>
    </location>
</feature>
<feature type="chain" id="PRO_0000008654" description="Electron transfer flavoprotein subunit alpha, mitochondrial">
    <location>
        <begin position="20"/>
        <end position="333"/>
    </location>
</feature>
<feature type="region of interest" description="Domain I" evidence="1">
    <location>
        <begin position="20"/>
        <end position="204"/>
    </location>
</feature>
<feature type="region of interest" description="Domain II" evidence="1">
    <location>
        <begin position="205"/>
        <end position="333"/>
    </location>
</feature>
<feature type="binding site" evidence="1">
    <location>
        <position position="223"/>
    </location>
    <ligand>
        <name>FAD</name>
        <dbReference type="ChEBI" id="CHEBI:57692"/>
    </ligand>
</feature>
<feature type="binding site" evidence="1">
    <location>
        <position position="248"/>
    </location>
    <ligand>
        <name>FAD</name>
        <dbReference type="ChEBI" id="CHEBI:57692"/>
    </ligand>
</feature>
<feature type="binding site" evidence="1">
    <location>
        <begin position="263"/>
        <end position="266"/>
    </location>
    <ligand>
        <name>FAD</name>
        <dbReference type="ChEBI" id="CHEBI:57692"/>
    </ligand>
</feature>
<feature type="binding site" evidence="1">
    <location>
        <begin position="281"/>
        <end position="286"/>
    </location>
    <ligand>
        <name>FAD</name>
        <dbReference type="ChEBI" id="CHEBI:57692"/>
    </ligand>
</feature>
<feature type="binding site" evidence="1">
    <location>
        <position position="300"/>
    </location>
    <ligand>
        <name>FAD</name>
        <dbReference type="ChEBI" id="CHEBI:57692"/>
    </ligand>
</feature>
<feature type="binding site" evidence="1">
    <location>
        <begin position="318"/>
        <end position="319"/>
    </location>
    <ligand>
        <name>FAD</name>
        <dbReference type="ChEBI" id="CHEBI:57692"/>
    </ligand>
</feature>
<feature type="modified residue" description="N6-acetyllysine; alternate" evidence="2">
    <location>
        <position position="59"/>
    </location>
</feature>
<feature type="modified residue" description="N6-succinyllysine; alternate" evidence="2">
    <location>
        <position position="59"/>
    </location>
</feature>
<feature type="modified residue" description="N6-acetyllysine" evidence="2">
    <location>
        <position position="62"/>
    </location>
</feature>
<feature type="modified residue" description="N6-acetyllysine; alternate" evidence="2">
    <location>
        <position position="69"/>
    </location>
</feature>
<feature type="modified residue" description="N6-succinyllysine; alternate" evidence="2">
    <location>
        <position position="69"/>
    </location>
</feature>
<feature type="modified residue" description="N6-acetyllysine" evidence="2">
    <location>
        <position position="75"/>
    </location>
</feature>
<feature type="modified residue" description="N6-acetyllysine; alternate" evidence="2">
    <location>
        <position position="85"/>
    </location>
</feature>
<feature type="modified residue" description="N6-succinyllysine; alternate" evidence="2">
    <location>
        <position position="85"/>
    </location>
</feature>
<feature type="modified residue" description="Phosphothreonine" evidence="2">
    <location>
        <position position="93"/>
    </location>
</feature>
<feature type="modified residue" description="N6-acetyllysine" evidence="2">
    <location>
        <position position="101"/>
    </location>
</feature>
<feature type="modified residue" description="N6-acetyllysine" evidence="2">
    <location>
        <position position="139"/>
    </location>
</feature>
<feature type="modified residue" description="Phosphoserine" evidence="1">
    <location>
        <position position="140"/>
    </location>
</feature>
<feature type="modified residue" description="N6-acetyllysine; alternate" evidence="2">
    <location>
        <position position="158"/>
    </location>
</feature>
<feature type="modified residue" description="N6-succinyllysine; alternate" evidence="2">
    <location>
        <position position="158"/>
    </location>
</feature>
<feature type="modified residue" description="N6-acetyllysine" evidence="2">
    <location>
        <position position="164"/>
    </location>
</feature>
<feature type="modified residue" description="N6-succinyllysine" evidence="2">
    <location>
        <position position="187"/>
    </location>
</feature>
<feature type="modified residue" description="N6-acetyllysine; alternate" evidence="2">
    <location>
        <position position="203"/>
    </location>
</feature>
<feature type="modified residue" description="N6-succinyllysine; alternate" evidence="2">
    <location>
        <position position="203"/>
    </location>
</feature>
<feature type="modified residue" description="N6-succinyllysine" evidence="2">
    <location>
        <position position="216"/>
    </location>
</feature>
<feature type="modified residue" description="N6-acetyllysine; alternate" evidence="2">
    <location>
        <position position="226"/>
    </location>
</feature>
<feature type="modified residue" description="N6-succinyllysine; alternate" evidence="2">
    <location>
        <position position="226"/>
    </location>
</feature>
<feature type="modified residue" description="N6-acetyllysine; alternate" evidence="2">
    <location>
        <position position="232"/>
    </location>
</feature>
<feature type="modified residue" description="N6-succinyllysine; alternate" evidence="2">
    <location>
        <position position="232"/>
    </location>
</feature>
<feature type="modified residue" description="N6-succinyllysine" evidence="2">
    <location>
        <position position="301"/>
    </location>
</feature>
<feature type="sequence conflict" description="In Ref. 1; AAA41130." evidence="5" ref="1">
    <original>C</original>
    <variation>V</variation>
    <location>
        <position position="109"/>
    </location>
</feature>
<feature type="sequence conflict" description="In Ref. 1; AAA41130." evidence="5" ref="1">
    <original>G</original>
    <variation>A</variation>
    <location>
        <position position="151"/>
    </location>
</feature>
<feature type="sequence conflict" description="In Ref. 1; AAA41130." evidence="5" ref="1">
    <original>L</original>
    <variation>Q</variation>
    <location>
        <position position="234"/>
    </location>
</feature>
<comment type="function">
    <text evidence="1 4 5">Heterodimeric electron transfer flavoprotein that accepts electrons from several mitochondrial dehydrogenases, including acyl-CoA dehydrogenases, glutaryl-CoA and sarcosine dehydrogenase (PubMed:7334008). It transfers the electrons to the main mitochondrial respiratory chain via ETF-ubiquinone oxidoreductase (ETF dehydrogenase) (Probable). Required for normal mitochondrial fatty acid oxidation and normal amino acid metabolism.</text>
</comment>
<comment type="cofactor">
    <cofactor evidence="1">
        <name>FAD</name>
        <dbReference type="ChEBI" id="CHEBI:57692"/>
    </cofactor>
    <text evidence="1">Binds 1 FAD per dimer.</text>
</comment>
<comment type="subunit">
    <text evidence="1 2 4">Heterodimer composed of ETFA and ETFB (PubMed:7334008). Identified in a complex that contains ETFA, ETFB and ETFRF1. Interaction with ETFRF1 promotes dissociation of the bound FAD and loss of electron transfer activity (By similarity). Interacts with TASOR (By similarity).</text>
</comment>
<comment type="subcellular location">
    <subcellularLocation>
        <location evidence="6">Mitochondrion matrix</location>
    </subcellularLocation>
</comment>
<comment type="domain">
    <text evidence="1">Domain I shares an identical polypeptide fold with the beta subunit ETFB though there is no sequence similarity.</text>
</comment>
<comment type="similarity">
    <text evidence="5">Belongs to the ETF alpha-subunit/FixB family.</text>
</comment>
<comment type="sequence caution" evidence="5">
    <conflict type="frameshift">
        <sequence resource="EMBL-CDS" id="AAA41130"/>
    </conflict>
</comment>
<name>ETFA_RAT</name>